<dbReference type="EMBL" id="AM398681">
    <property type="protein sequence ID" value="CAL42581.1"/>
    <property type="molecule type" value="Genomic_DNA"/>
</dbReference>
<dbReference type="RefSeq" id="WP_011962639.1">
    <property type="nucleotide sequence ID" value="NC_009613.3"/>
</dbReference>
<dbReference type="RefSeq" id="YP_001295399.1">
    <property type="nucleotide sequence ID" value="NC_009613.3"/>
</dbReference>
<dbReference type="SMR" id="A6GWV8"/>
<dbReference type="STRING" id="402612.FP0470"/>
<dbReference type="EnsemblBacteria" id="CAL42581">
    <property type="protein sequence ID" value="CAL42581"/>
    <property type="gene ID" value="FP0470"/>
</dbReference>
<dbReference type="GeneID" id="66551608"/>
<dbReference type="KEGG" id="fps:FP0470"/>
<dbReference type="PATRIC" id="fig|402612.5.peg.485"/>
<dbReference type="eggNOG" id="COG0532">
    <property type="taxonomic scope" value="Bacteria"/>
</dbReference>
<dbReference type="HOGENOM" id="CLU_006301_0_1_10"/>
<dbReference type="OrthoDB" id="9811804at2"/>
<dbReference type="Proteomes" id="UP000006394">
    <property type="component" value="Chromosome"/>
</dbReference>
<dbReference type="GO" id="GO:0005737">
    <property type="term" value="C:cytoplasm"/>
    <property type="evidence" value="ECO:0007669"/>
    <property type="project" value="UniProtKB-SubCell"/>
</dbReference>
<dbReference type="GO" id="GO:0005525">
    <property type="term" value="F:GTP binding"/>
    <property type="evidence" value="ECO:0007669"/>
    <property type="project" value="UniProtKB-KW"/>
</dbReference>
<dbReference type="GO" id="GO:0003924">
    <property type="term" value="F:GTPase activity"/>
    <property type="evidence" value="ECO:0007669"/>
    <property type="project" value="UniProtKB-UniRule"/>
</dbReference>
<dbReference type="GO" id="GO:0003743">
    <property type="term" value="F:translation initiation factor activity"/>
    <property type="evidence" value="ECO:0007669"/>
    <property type="project" value="UniProtKB-UniRule"/>
</dbReference>
<dbReference type="CDD" id="cd01887">
    <property type="entry name" value="IF2_eIF5B"/>
    <property type="match status" value="1"/>
</dbReference>
<dbReference type="CDD" id="cd03702">
    <property type="entry name" value="IF2_mtIF2_II"/>
    <property type="match status" value="1"/>
</dbReference>
<dbReference type="CDD" id="cd03692">
    <property type="entry name" value="mtIF2_IVc"/>
    <property type="match status" value="1"/>
</dbReference>
<dbReference type="FunFam" id="2.40.30.10:FF:000007">
    <property type="entry name" value="Translation initiation factor IF-2"/>
    <property type="match status" value="1"/>
</dbReference>
<dbReference type="FunFam" id="2.40.30.10:FF:000008">
    <property type="entry name" value="Translation initiation factor IF-2"/>
    <property type="match status" value="1"/>
</dbReference>
<dbReference type="FunFam" id="3.40.50.10050:FF:000001">
    <property type="entry name" value="Translation initiation factor IF-2"/>
    <property type="match status" value="1"/>
</dbReference>
<dbReference type="FunFam" id="3.40.50.300:FF:000019">
    <property type="entry name" value="Translation initiation factor IF-2"/>
    <property type="match status" value="1"/>
</dbReference>
<dbReference type="Gene3D" id="3.40.50.300">
    <property type="entry name" value="P-loop containing nucleotide triphosphate hydrolases"/>
    <property type="match status" value="1"/>
</dbReference>
<dbReference type="Gene3D" id="2.40.30.10">
    <property type="entry name" value="Translation factors"/>
    <property type="match status" value="2"/>
</dbReference>
<dbReference type="Gene3D" id="3.40.50.10050">
    <property type="entry name" value="Translation initiation factor IF- 2, domain 3"/>
    <property type="match status" value="1"/>
</dbReference>
<dbReference type="HAMAP" id="MF_00100_B">
    <property type="entry name" value="IF_2_B"/>
    <property type="match status" value="1"/>
</dbReference>
<dbReference type="InterPro" id="IPR053905">
    <property type="entry name" value="EF-G-like_DII"/>
</dbReference>
<dbReference type="InterPro" id="IPR044145">
    <property type="entry name" value="IF2_II"/>
</dbReference>
<dbReference type="InterPro" id="IPR006847">
    <property type="entry name" value="IF2_N"/>
</dbReference>
<dbReference type="InterPro" id="IPR027417">
    <property type="entry name" value="P-loop_NTPase"/>
</dbReference>
<dbReference type="InterPro" id="IPR005225">
    <property type="entry name" value="Small_GTP-bd"/>
</dbReference>
<dbReference type="InterPro" id="IPR000795">
    <property type="entry name" value="T_Tr_GTP-bd_dom"/>
</dbReference>
<dbReference type="InterPro" id="IPR000178">
    <property type="entry name" value="TF_IF2_bacterial-like"/>
</dbReference>
<dbReference type="InterPro" id="IPR015760">
    <property type="entry name" value="TIF_IF2"/>
</dbReference>
<dbReference type="InterPro" id="IPR023115">
    <property type="entry name" value="TIF_IF2_dom3"/>
</dbReference>
<dbReference type="InterPro" id="IPR036925">
    <property type="entry name" value="TIF_IF2_dom3_sf"/>
</dbReference>
<dbReference type="InterPro" id="IPR009000">
    <property type="entry name" value="Transl_B-barrel_sf"/>
</dbReference>
<dbReference type="NCBIfam" id="TIGR00487">
    <property type="entry name" value="IF-2"/>
    <property type="match status" value="1"/>
</dbReference>
<dbReference type="NCBIfam" id="TIGR00231">
    <property type="entry name" value="small_GTP"/>
    <property type="match status" value="1"/>
</dbReference>
<dbReference type="PANTHER" id="PTHR43381:SF5">
    <property type="entry name" value="TR-TYPE G DOMAIN-CONTAINING PROTEIN"/>
    <property type="match status" value="1"/>
</dbReference>
<dbReference type="PANTHER" id="PTHR43381">
    <property type="entry name" value="TRANSLATION INITIATION FACTOR IF-2-RELATED"/>
    <property type="match status" value="1"/>
</dbReference>
<dbReference type="Pfam" id="PF22042">
    <property type="entry name" value="EF-G_D2"/>
    <property type="match status" value="1"/>
</dbReference>
<dbReference type="Pfam" id="PF00009">
    <property type="entry name" value="GTP_EFTU"/>
    <property type="match status" value="1"/>
</dbReference>
<dbReference type="Pfam" id="PF11987">
    <property type="entry name" value="IF-2"/>
    <property type="match status" value="1"/>
</dbReference>
<dbReference type="Pfam" id="PF04760">
    <property type="entry name" value="IF2_N"/>
    <property type="match status" value="1"/>
</dbReference>
<dbReference type="SUPFAM" id="SSF52156">
    <property type="entry name" value="Initiation factor IF2/eIF5b, domain 3"/>
    <property type="match status" value="1"/>
</dbReference>
<dbReference type="SUPFAM" id="SSF52540">
    <property type="entry name" value="P-loop containing nucleoside triphosphate hydrolases"/>
    <property type="match status" value="1"/>
</dbReference>
<dbReference type="SUPFAM" id="SSF50447">
    <property type="entry name" value="Translation proteins"/>
    <property type="match status" value="2"/>
</dbReference>
<dbReference type="PROSITE" id="PS51722">
    <property type="entry name" value="G_TR_2"/>
    <property type="match status" value="1"/>
</dbReference>
<dbReference type="PROSITE" id="PS01176">
    <property type="entry name" value="IF2"/>
    <property type="match status" value="1"/>
</dbReference>
<comment type="function">
    <text evidence="2">One of the essential components for the initiation of protein synthesis. Protects formylmethionyl-tRNA from spontaneous hydrolysis and promotes its binding to the 30S ribosomal subunits. Also involved in the hydrolysis of GTP during the formation of the 70S ribosomal complex.</text>
</comment>
<comment type="subcellular location">
    <subcellularLocation>
        <location evidence="2">Cytoplasm</location>
    </subcellularLocation>
</comment>
<comment type="similarity">
    <text evidence="2">Belongs to the TRAFAC class translation factor GTPase superfamily. Classic translation factor GTPase family. IF-2 subfamily.</text>
</comment>
<protein>
    <recommendedName>
        <fullName evidence="2">Translation initiation factor IF-2</fullName>
    </recommendedName>
</protein>
<name>IF2_FLAPJ</name>
<keyword id="KW-0963">Cytoplasm</keyword>
<keyword id="KW-0342">GTP-binding</keyword>
<keyword id="KW-0396">Initiation factor</keyword>
<keyword id="KW-0547">Nucleotide-binding</keyword>
<keyword id="KW-0648">Protein biosynthesis</keyword>
<keyword id="KW-1185">Reference proteome</keyword>
<gene>
    <name evidence="2" type="primary">infB</name>
    <name type="ordered locus">FP0470</name>
</gene>
<sequence>MSEGTIRINKVLREFNISLERAVDYLKDKGHVIESNPNTKISDEVYNVLSNQFAGDKGNKDASKEVGEEKRKEKEALRVERENEIEEKRKVDEERQRQEVIRAKAVVTGLKQVGTIDLSAKSVIKPTIIPGVKAEAKAEVKTEAKVEAKTEVKVEVKVEPKAEMPVAKTPEKSEQPKQHVAKETLVKEKIFAKEPAKNVAKPIVGKTPEATSKPSVEDAPVDETHETKYTKLTGPTFSGQTIDLSQFNKPKKIIEPNKGGAKPAGAGNNNNNKNKRKRIPTKSGEANATPRVPGTNLIRPNTGGNATGGGFNRANKPGFVKGARPAIVPKVEPTEEDVKNQIKETLERLQGKGNKSKAAKYRRDKRDTHRQKSDDEQRELEAGSKTIKVTEFVTVGEVATMMDVPITKVIGTCMSLGIMVTMNQRLDAETLTIVCDEFGFEVEFITTDLEENIEVVEDSAEDLVHRAPIVTVMGHVDHGKTSLLDYIRKTNVIAGESGGITQHIGAYGVELENGQKIAFLDTPGHEAFTAMRARGAQVTDIAIIVVAADDDIMPQTKEAISHAQAANVPIIFAINKVDKQNANPEKIKEKLAAMNFLVEDWGGKYQSQDISAKTGIGMKELLEKVLLEAEVLDLKANPNKPATGTVVEAFLDKGRGYVSTVLVQAGTMRVGDYILAGKNHGKIKAMQDERGNNVTEAGPSTPISILGLAGAPTAGDKFNIFADEREAKAIAAKRTQLMREQSVRVQRHITLDEIGRRIALGQFKELNIILKGDVDGSVEALSDSFSKLSTPEIQINIIHKGVGAITETDVMLASASDAIIIGFNVRPAGNAKQLAEKEEIDIRHYSIIYAAIDDLRDAMEGMLSPEMKEEITGLAGVRELFKISKVGTIAGCMITDGKILRANKVRVIRDNVVIHTGDIIALKRFKDDVKEVAKGYDCGIQIKGFNEIEIDDIIEGFTEVAVKRKLK</sequence>
<reference key="1">
    <citation type="journal article" date="2007" name="Nat. Biotechnol.">
        <title>Complete genome sequence of the fish pathogen Flavobacterium psychrophilum.</title>
        <authorList>
            <person name="Duchaud E."/>
            <person name="Boussaha M."/>
            <person name="Loux V."/>
            <person name="Bernardet J.-F."/>
            <person name="Michel C."/>
            <person name="Kerouault B."/>
            <person name="Mondot S."/>
            <person name="Nicolas P."/>
            <person name="Bossy R."/>
            <person name="Caron C."/>
            <person name="Bessieres P."/>
            <person name="Gibrat J.-F."/>
            <person name="Claverol S."/>
            <person name="Dumetz F."/>
            <person name="Le Henaff M."/>
            <person name="Benmansour A."/>
        </authorList>
    </citation>
    <scope>NUCLEOTIDE SEQUENCE [LARGE SCALE GENOMIC DNA]</scope>
    <source>
        <strain>ATCC 49511 / DSM 21280 / CIP 103535 / JIP02/86</strain>
    </source>
</reference>
<organism>
    <name type="scientific">Flavobacterium psychrophilum (strain ATCC 49511 / DSM 21280 / CIP 103535 / JIP02/86)</name>
    <dbReference type="NCBI Taxonomy" id="402612"/>
    <lineage>
        <taxon>Bacteria</taxon>
        <taxon>Pseudomonadati</taxon>
        <taxon>Bacteroidota</taxon>
        <taxon>Flavobacteriia</taxon>
        <taxon>Flavobacteriales</taxon>
        <taxon>Flavobacteriaceae</taxon>
        <taxon>Flavobacterium</taxon>
    </lineage>
</organism>
<accession>A6GWV8</accession>
<feature type="chain" id="PRO_0000335469" description="Translation initiation factor IF-2">
    <location>
        <begin position="1"/>
        <end position="967"/>
    </location>
</feature>
<feature type="domain" description="tr-type G">
    <location>
        <begin position="465"/>
        <end position="635"/>
    </location>
</feature>
<feature type="region of interest" description="Disordered" evidence="3">
    <location>
        <begin position="201"/>
        <end position="320"/>
    </location>
</feature>
<feature type="region of interest" description="Disordered" evidence="3">
    <location>
        <begin position="349"/>
        <end position="382"/>
    </location>
</feature>
<feature type="region of interest" description="G1" evidence="1">
    <location>
        <begin position="474"/>
        <end position="481"/>
    </location>
</feature>
<feature type="region of interest" description="G2" evidence="1">
    <location>
        <begin position="499"/>
        <end position="503"/>
    </location>
</feature>
<feature type="region of interest" description="G3" evidence="1">
    <location>
        <begin position="521"/>
        <end position="524"/>
    </location>
</feature>
<feature type="region of interest" description="G4" evidence="1">
    <location>
        <begin position="575"/>
        <end position="578"/>
    </location>
</feature>
<feature type="region of interest" description="G5" evidence="1">
    <location>
        <begin position="611"/>
        <end position="613"/>
    </location>
</feature>
<feature type="compositionally biased region" description="Polar residues" evidence="3">
    <location>
        <begin position="233"/>
        <end position="248"/>
    </location>
</feature>
<feature type="compositionally biased region" description="Low complexity" evidence="3">
    <location>
        <begin position="256"/>
        <end position="272"/>
    </location>
</feature>
<feature type="compositionally biased region" description="Basic residues" evidence="3">
    <location>
        <begin position="354"/>
        <end position="363"/>
    </location>
</feature>
<feature type="compositionally biased region" description="Basic and acidic residues" evidence="3">
    <location>
        <begin position="364"/>
        <end position="382"/>
    </location>
</feature>
<feature type="binding site" evidence="2">
    <location>
        <begin position="474"/>
        <end position="481"/>
    </location>
    <ligand>
        <name>GTP</name>
        <dbReference type="ChEBI" id="CHEBI:37565"/>
    </ligand>
</feature>
<feature type="binding site" evidence="2">
    <location>
        <begin position="521"/>
        <end position="525"/>
    </location>
    <ligand>
        <name>GTP</name>
        <dbReference type="ChEBI" id="CHEBI:37565"/>
    </ligand>
</feature>
<feature type="binding site" evidence="2">
    <location>
        <begin position="575"/>
        <end position="578"/>
    </location>
    <ligand>
        <name>GTP</name>
        <dbReference type="ChEBI" id="CHEBI:37565"/>
    </ligand>
</feature>
<proteinExistence type="inferred from homology"/>
<evidence type="ECO:0000250" key="1"/>
<evidence type="ECO:0000255" key="2">
    <source>
        <dbReference type="HAMAP-Rule" id="MF_00100"/>
    </source>
</evidence>
<evidence type="ECO:0000256" key="3">
    <source>
        <dbReference type="SAM" id="MobiDB-lite"/>
    </source>
</evidence>